<keyword id="KW-0067">ATP-binding</keyword>
<keyword id="KW-0963">Cytoplasm</keyword>
<keyword id="KW-0324">Glycolysis</keyword>
<keyword id="KW-0418">Kinase</keyword>
<keyword id="KW-0460">Magnesium</keyword>
<keyword id="KW-0479">Metal-binding</keyword>
<keyword id="KW-0547">Nucleotide-binding</keyword>
<keyword id="KW-1185">Reference proteome</keyword>
<keyword id="KW-0808">Transferase</keyword>
<name>PFKA_CHLAA</name>
<evidence type="ECO:0000255" key="1">
    <source>
        <dbReference type="HAMAP-Rule" id="MF_01976"/>
    </source>
</evidence>
<comment type="function">
    <text evidence="1">Catalyzes the phosphorylation of D-fructose 6-phosphate to fructose 1,6-bisphosphate by ATP, the first committing step of glycolysis.</text>
</comment>
<comment type="catalytic activity">
    <reaction evidence="1">
        <text>beta-D-fructose 6-phosphate + ATP = beta-D-fructose 1,6-bisphosphate + ADP + H(+)</text>
        <dbReference type="Rhea" id="RHEA:16109"/>
        <dbReference type="ChEBI" id="CHEBI:15378"/>
        <dbReference type="ChEBI" id="CHEBI:30616"/>
        <dbReference type="ChEBI" id="CHEBI:32966"/>
        <dbReference type="ChEBI" id="CHEBI:57634"/>
        <dbReference type="ChEBI" id="CHEBI:456216"/>
        <dbReference type="EC" id="2.7.1.11"/>
    </reaction>
</comment>
<comment type="cofactor">
    <cofactor evidence="1">
        <name>Mg(2+)</name>
        <dbReference type="ChEBI" id="CHEBI:18420"/>
    </cofactor>
</comment>
<comment type="pathway">
    <text evidence="1">Carbohydrate degradation; glycolysis; D-glyceraldehyde 3-phosphate and glycerone phosphate from D-glucose: step 3/4.</text>
</comment>
<comment type="subunit">
    <text evidence="1">Homodimer or homotetramer.</text>
</comment>
<comment type="subcellular location">
    <subcellularLocation>
        <location evidence="1">Cytoplasm</location>
    </subcellularLocation>
</comment>
<comment type="similarity">
    <text evidence="1">Belongs to the phosphofructokinase type A (PFKA) family. Mixed-substrate PFK group III subfamily.</text>
</comment>
<accession>A9WCU2</accession>
<feature type="chain" id="PRO_1000079308" description="ATP-dependent 6-phosphofructokinase">
    <location>
        <begin position="1"/>
        <end position="356"/>
    </location>
</feature>
<feature type="active site" description="Proton acceptor" evidence="1">
    <location>
        <position position="140"/>
    </location>
</feature>
<feature type="binding site" evidence="1">
    <location>
        <position position="15"/>
    </location>
    <ligand>
        <name>ATP</name>
        <dbReference type="ChEBI" id="CHEBI:30616"/>
    </ligand>
</feature>
<feature type="binding site" evidence="1">
    <location>
        <begin position="78"/>
        <end position="79"/>
    </location>
    <ligand>
        <name>ATP</name>
        <dbReference type="ChEBI" id="CHEBI:30616"/>
    </ligand>
</feature>
<feature type="binding site" evidence="1">
    <location>
        <begin position="115"/>
        <end position="118"/>
    </location>
    <ligand>
        <name>ATP</name>
        <dbReference type="ChEBI" id="CHEBI:30616"/>
    </ligand>
</feature>
<feature type="binding site" evidence="1">
    <location>
        <position position="116"/>
    </location>
    <ligand>
        <name>Mg(2+)</name>
        <dbReference type="ChEBI" id="CHEBI:18420"/>
        <note>catalytic</note>
    </ligand>
</feature>
<feature type="binding site" description="in other chain" evidence="1">
    <location>
        <begin position="138"/>
        <end position="140"/>
    </location>
    <ligand>
        <name>substrate</name>
        <note>ligand shared between dimeric partners</note>
    </ligand>
</feature>
<feature type="binding site" evidence="1">
    <location>
        <position position="175"/>
    </location>
    <ligand>
        <name>substrate</name>
        <note>ligand shared between dimeric partners</note>
    </ligand>
</feature>
<feature type="binding site" description="in other chain" evidence="1">
    <location>
        <begin position="182"/>
        <end position="184"/>
    </location>
    <ligand>
        <name>substrate</name>
        <note>ligand shared between dimeric partners</note>
    </ligand>
</feature>
<feature type="binding site" description="in other chain" evidence="1">
    <location>
        <position position="235"/>
    </location>
    <ligand>
        <name>substrate</name>
        <note>ligand shared between dimeric partners</note>
    </ligand>
</feature>
<feature type="binding site" evidence="1">
    <location>
        <position position="272"/>
    </location>
    <ligand>
        <name>substrate</name>
        <note>ligand shared between dimeric partners</note>
    </ligand>
</feature>
<feature type="binding site" description="in other chain" evidence="1">
    <location>
        <begin position="278"/>
        <end position="281"/>
    </location>
    <ligand>
        <name>substrate</name>
        <note>ligand shared between dimeric partners</note>
    </ligand>
</feature>
<feature type="site" description="Important for substrate specificity; cannot use PPi as phosphoryl donor" evidence="1">
    <location>
        <position position="117"/>
    </location>
</feature>
<reference key="1">
    <citation type="journal article" date="2011" name="BMC Genomics">
        <title>Complete genome sequence of the filamentous anoxygenic phototrophic bacterium Chloroflexus aurantiacus.</title>
        <authorList>
            <person name="Tang K.H."/>
            <person name="Barry K."/>
            <person name="Chertkov O."/>
            <person name="Dalin E."/>
            <person name="Han C.S."/>
            <person name="Hauser L.J."/>
            <person name="Honchak B.M."/>
            <person name="Karbach L.E."/>
            <person name="Land M.L."/>
            <person name="Lapidus A."/>
            <person name="Larimer F.W."/>
            <person name="Mikhailova N."/>
            <person name="Pitluck S."/>
            <person name="Pierson B.K."/>
            <person name="Blankenship R.E."/>
        </authorList>
    </citation>
    <scope>NUCLEOTIDE SEQUENCE [LARGE SCALE GENOMIC DNA]</scope>
    <source>
        <strain>ATCC 29366 / DSM 635 / J-10-fl</strain>
    </source>
</reference>
<gene>
    <name evidence="1" type="primary">pfkA</name>
    <name type="ordered locus">Caur_0258</name>
</gene>
<proteinExistence type="inferred from homology"/>
<sequence length="356" mass="37703">MASKKQRIGVLTSGGDAPGLNAVIRAVVKSASGLGWEVIGIHDGFEGLLGTKSYRVLTNADVQGLLPRGGTILRTTNKGHFGPRRSDELSEADPYVRAVKAIEEMGLRALITIGGEGTQRIALELHKLGAPVIGVPKTIDNDLAGTDRTFGFDTALQVATDAIDRLHTTAASHNRVMVLEVMGRHTGWIALHAGLAGGADVILIPEIPFSIERVAEKVMARDQQGSSFSIIVVAEGARPRGGSEMYIAEGRLGGIGHWVGEQLEKLTAKEVRVVVLGHLQRGGSPSPYDRLLSTRYGAAAVQAAARGIYGEMVALRGQDIVTVPLAEACGHLNRVRPHSDLVLCARSLGIAFGDEL</sequence>
<organism>
    <name type="scientific">Chloroflexus aurantiacus (strain ATCC 29366 / DSM 635 / J-10-fl)</name>
    <dbReference type="NCBI Taxonomy" id="324602"/>
    <lineage>
        <taxon>Bacteria</taxon>
        <taxon>Bacillati</taxon>
        <taxon>Chloroflexota</taxon>
        <taxon>Chloroflexia</taxon>
        <taxon>Chloroflexales</taxon>
        <taxon>Chloroflexineae</taxon>
        <taxon>Chloroflexaceae</taxon>
        <taxon>Chloroflexus</taxon>
    </lineage>
</organism>
<protein>
    <recommendedName>
        <fullName evidence="1">ATP-dependent 6-phosphofructokinase</fullName>
        <shortName evidence="1">ATP-PFK</shortName>
        <shortName evidence="1">Phosphofructokinase</shortName>
        <ecNumber evidence="1">2.7.1.11</ecNumber>
    </recommendedName>
    <alternativeName>
        <fullName evidence="1">Phosphohexokinase</fullName>
    </alternativeName>
</protein>
<dbReference type="EC" id="2.7.1.11" evidence="1"/>
<dbReference type="EMBL" id="CP000909">
    <property type="protein sequence ID" value="ABY33511.1"/>
    <property type="molecule type" value="Genomic_DNA"/>
</dbReference>
<dbReference type="RefSeq" id="WP_012256167.1">
    <property type="nucleotide sequence ID" value="NC_010175.1"/>
</dbReference>
<dbReference type="RefSeq" id="YP_001633900.1">
    <property type="nucleotide sequence ID" value="NC_010175.1"/>
</dbReference>
<dbReference type="SMR" id="A9WCU2"/>
<dbReference type="FunCoup" id="A9WCU2">
    <property type="interactions" value="347"/>
</dbReference>
<dbReference type="STRING" id="324602.Caur_0258"/>
<dbReference type="EnsemblBacteria" id="ABY33511">
    <property type="protein sequence ID" value="ABY33511"/>
    <property type="gene ID" value="Caur_0258"/>
</dbReference>
<dbReference type="KEGG" id="cau:Caur_0258"/>
<dbReference type="PATRIC" id="fig|324602.8.peg.298"/>
<dbReference type="eggNOG" id="COG0205">
    <property type="taxonomic scope" value="Bacteria"/>
</dbReference>
<dbReference type="HOGENOM" id="CLU_020655_0_0_0"/>
<dbReference type="InParanoid" id="A9WCU2"/>
<dbReference type="UniPathway" id="UPA00109">
    <property type="reaction ID" value="UER00182"/>
</dbReference>
<dbReference type="Proteomes" id="UP000002008">
    <property type="component" value="Chromosome"/>
</dbReference>
<dbReference type="GO" id="GO:0005945">
    <property type="term" value="C:6-phosphofructokinase complex"/>
    <property type="evidence" value="ECO:0000318"/>
    <property type="project" value="GO_Central"/>
</dbReference>
<dbReference type="GO" id="GO:0003872">
    <property type="term" value="F:6-phosphofructokinase activity"/>
    <property type="evidence" value="ECO:0000318"/>
    <property type="project" value="GO_Central"/>
</dbReference>
<dbReference type="GO" id="GO:0005524">
    <property type="term" value="F:ATP binding"/>
    <property type="evidence" value="ECO:0007669"/>
    <property type="project" value="UniProtKB-KW"/>
</dbReference>
<dbReference type="GO" id="GO:0047334">
    <property type="term" value="F:diphosphate-fructose-6-phosphate 1-phosphotransferase activity"/>
    <property type="evidence" value="ECO:0007669"/>
    <property type="project" value="InterPro"/>
</dbReference>
<dbReference type="GO" id="GO:0070095">
    <property type="term" value="F:fructose-6-phosphate binding"/>
    <property type="evidence" value="ECO:0000318"/>
    <property type="project" value="GO_Central"/>
</dbReference>
<dbReference type="GO" id="GO:0046872">
    <property type="term" value="F:metal ion binding"/>
    <property type="evidence" value="ECO:0007669"/>
    <property type="project" value="UniProtKB-KW"/>
</dbReference>
<dbReference type="GO" id="GO:0061621">
    <property type="term" value="P:canonical glycolysis"/>
    <property type="evidence" value="ECO:0000318"/>
    <property type="project" value="GO_Central"/>
</dbReference>
<dbReference type="GO" id="GO:0030388">
    <property type="term" value="P:fructose 1,6-bisphosphate metabolic process"/>
    <property type="evidence" value="ECO:0000318"/>
    <property type="project" value="GO_Central"/>
</dbReference>
<dbReference type="GO" id="GO:0006002">
    <property type="term" value="P:fructose 6-phosphate metabolic process"/>
    <property type="evidence" value="ECO:0000318"/>
    <property type="project" value="GO_Central"/>
</dbReference>
<dbReference type="FunFam" id="3.40.50.460:FF:000002">
    <property type="entry name" value="ATP-dependent 6-phosphofructokinase"/>
    <property type="match status" value="1"/>
</dbReference>
<dbReference type="Gene3D" id="3.40.50.450">
    <property type="match status" value="1"/>
</dbReference>
<dbReference type="Gene3D" id="3.40.50.460">
    <property type="entry name" value="Phosphofructokinase domain"/>
    <property type="match status" value="1"/>
</dbReference>
<dbReference type="HAMAP" id="MF_01976">
    <property type="entry name" value="Phosphofructokinase_III"/>
    <property type="match status" value="1"/>
</dbReference>
<dbReference type="InterPro" id="IPR022953">
    <property type="entry name" value="ATP_PFK"/>
</dbReference>
<dbReference type="InterPro" id="IPR012003">
    <property type="entry name" value="ATP_PFK_prok-type"/>
</dbReference>
<dbReference type="InterPro" id="IPR015912">
    <property type="entry name" value="Phosphofructokinase_CS"/>
</dbReference>
<dbReference type="InterPro" id="IPR000023">
    <property type="entry name" value="Phosphofructokinase_dom"/>
</dbReference>
<dbReference type="InterPro" id="IPR012829">
    <property type="entry name" value="Phosphofructokinase_III"/>
</dbReference>
<dbReference type="InterPro" id="IPR035966">
    <property type="entry name" value="PKF_sf"/>
</dbReference>
<dbReference type="NCBIfam" id="TIGR02483">
    <property type="entry name" value="PFK_mixed"/>
    <property type="match status" value="1"/>
</dbReference>
<dbReference type="NCBIfam" id="NF002872">
    <property type="entry name" value="PRK03202.1"/>
    <property type="match status" value="1"/>
</dbReference>
<dbReference type="PANTHER" id="PTHR13697:SF52">
    <property type="entry name" value="ATP-DEPENDENT 6-PHOSPHOFRUCTOKINASE 3"/>
    <property type="match status" value="1"/>
</dbReference>
<dbReference type="PANTHER" id="PTHR13697">
    <property type="entry name" value="PHOSPHOFRUCTOKINASE"/>
    <property type="match status" value="1"/>
</dbReference>
<dbReference type="Pfam" id="PF00365">
    <property type="entry name" value="PFK"/>
    <property type="match status" value="1"/>
</dbReference>
<dbReference type="PIRSF" id="PIRSF000532">
    <property type="entry name" value="ATP_PFK_prok"/>
    <property type="match status" value="1"/>
</dbReference>
<dbReference type="PRINTS" id="PR00476">
    <property type="entry name" value="PHFRCTKINASE"/>
</dbReference>
<dbReference type="SUPFAM" id="SSF53784">
    <property type="entry name" value="Phosphofructokinase"/>
    <property type="match status" value="1"/>
</dbReference>
<dbReference type="PROSITE" id="PS00433">
    <property type="entry name" value="PHOSPHOFRUCTOKINASE"/>
    <property type="match status" value="1"/>
</dbReference>